<proteinExistence type="inferred from homology"/>
<dbReference type="EC" id="3.1.3.11" evidence="1"/>
<dbReference type="EMBL" id="CP000025">
    <property type="protein sequence ID" value="AAW35264.1"/>
    <property type="molecule type" value="Genomic_DNA"/>
</dbReference>
<dbReference type="RefSeq" id="WP_002867481.1">
    <property type="nucleotide sequence ID" value="NC_003912.7"/>
</dbReference>
<dbReference type="SMR" id="Q5HUV6"/>
<dbReference type="KEGG" id="cjr:CJE0927"/>
<dbReference type="HOGENOM" id="CLU_039977_0_0_7"/>
<dbReference type="UniPathway" id="UPA00138"/>
<dbReference type="GO" id="GO:0005829">
    <property type="term" value="C:cytosol"/>
    <property type="evidence" value="ECO:0007669"/>
    <property type="project" value="TreeGrafter"/>
</dbReference>
<dbReference type="GO" id="GO:0042132">
    <property type="term" value="F:fructose 1,6-bisphosphate 1-phosphatase activity"/>
    <property type="evidence" value="ECO:0007669"/>
    <property type="project" value="UniProtKB-UniRule"/>
</dbReference>
<dbReference type="GO" id="GO:0000287">
    <property type="term" value="F:magnesium ion binding"/>
    <property type="evidence" value="ECO:0007669"/>
    <property type="project" value="UniProtKB-UniRule"/>
</dbReference>
<dbReference type="GO" id="GO:0030388">
    <property type="term" value="P:fructose 1,6-bisphosphate metabolic process"/>
    <property type="evidence" value="ECO:0007669"/>
    <property type="project" value="TreeGrafter"/>
</dbReference>
<dbReference type="GO" id="GO:0006002">
    <property type="term" value="P:fructose 6-phosphate metabolic process"/>
    <property type="evidence" value="ECO:0007669"/>
    <property type="project" value="TreeGrafter"/>
</dbReference>
<dbReference type="GO" id="GO:0006000">
    <property type="term" value="P:fructose metabolic process"/>
    <property type="evidence" value="ECO:0007669"/>
    <property type="project" value="TreeGrafter"/>
</dbReference>
<dbReference type="GO" id="GO:0006094">
    <property type="term" value="P:gluconeogenesis"/>
    <property type="evidence" value="ECO:0007669"/>
    <property type="project" value="UniProtKB-UniRule"/>
</dbReference>
<dbReference type="GO" id="GO:0005986">
    <property type="term" value="P:sucrose biosynthetic process"/>
    <property type="evidence" value="ECO:0007669"/>
    <property type="project" value="TreeGrafter"/>
</dbReference>
<dbReference type="Gene3D" id="3.40.190.80">
    <property type="match status" value="1"/>
</dbReference>
<dbReference type="Gene3D" id="3.30.540.10">
    <property type="entry name" value="Fructose-1,6-Bisphosphatase, subunit A, domain 1"/>
    <property type="match status" value="1"/>
</dbReference>
<dbReference type="HAMAP" id="MF_01855">
    <property type="entry name" value="FBPase_class1"/>
    <property type="match status" value="1"/>
</dbReference>
<dbReference type="InterPro" id="IPR044015">
    <property type="entry name" value="FBPase_C_dom"/>
</dbReference>
<dbReference type="InterPro" id="IPR000146">
    <property type="entry name" value="FBPase_class-1"/>
</dbReference>
<dbReference type="InterPro" id="IPR033391">
    <property type="entry name" value="FBPase_N"/>
</dbReference>
<dbReference type="InterPro" id="IPR028343">
    <property type="entry name" value="FBPtase"/>
</dbReference>
<dbReference type="InterPro" id="IPR023079">
    <property type="entry name" value="SBPase"/>
</dbReference>
<dbReference type="NCBIfam" id="NF006782">
    <property type="entry name" value="PRK09293.2-3"/>
    <property type="match status" value="1"/>
</dbReference>
<dbReference type="PANTHER" id="PTHR11556">
    <property type="entry name" value="FRUCTOSE-1,6-BISPHOSPHATASE-RELATED"/>
    <property type="match status" value="1"/>
</dbReference>
<dbReference type="PANTHER" id="PTHR11556:SF35">
    <property type="entry name" value="SEDOHEPTULOSE-1,7-BISPHOSPHATASE, CHLOROPLASTIC"/>
    <property type="match status" value="1"/>
</dbReference>
<dbReference type="Pfam" id="PF00316">
    <property type="entry name" value="FBPase"/>
    <property type="match status" value="1"/>
</dbReference>
<dbReference type="Pfam" id="PF18913">
    <property type="entry name" value="FBPase_C"/>
    <property type="match status" value="1"/>
</dbReference>
<dbReference type="PIRSF" id="PIRSF500210">
    <property type="entry name" value="FBPtase"/>
    <property type="match status" value="1"/>
</dbReference>
<dbReference type="PIRSF" id="PIRSF000904">
    <property type="entry name" value="FBPtase_SBPase"/>
    <property type="match status" value="1"/>
</dbReference>
<dbReference type="PRINTS" id="PR01958">
    <property type="entry name" value="S17BPHPHTASE"/>
</dbReference>
<dbReference type="SUPFAM" id="SSF56655">
    <property type="entry name" value="Carbohydrate phosphatase"/>
    <property type="match status" value="1"/>
</dbReference>
<feature type="chain" id="PRO_0000364513" description="Fructose-1,6-bisphosphatase class 1">
    <location>
        <begin position="1"/>
        <end position="280"/>
    </location>
</feature>
<feature type="binding site" evidence="1">
    <location>
        <position position="64"/>
    </location>
    <ligand>
        <name>Mg(2+)</name>
        <dbReference type="ChEBI" id="CHEBI:18420"/>
        <label>1</label>
    </ligand>
</feature>
<feature type="binding site" evidence="1">
    <location>
        <position position="83"/>
    </location>
    <ligand>
        <name>Mg(2+)</name>
        <dbReference type="ChEBI" id="CHEBI:18420"/>
        <label>1</label>
    </ligand>
</feature>
<feature type="binding site" evidence="1">
    <location>
        <position position="83"/>
    </location>
    <ligand>
        <name>Mg(2+)</name>
        <dbReference type="ChEBI" id="CHEBI:18420"/>
        <label>2</label>
    </ligand>
</feature>
<feature type="binding site" evidence="1">
    <location>
        <position position="85"/>
    </location>
    <ligand>
        <name>Mg(2+)</name>
        <dbReference type="ChEBI" id="CHEBI:18420"/>
        <label>1</label>
    </ligand>
</feature>
<feature type="binding site" evidence="1">
    <location>
        <begin position="86"/>
        <end position="89"/>
    </location>
    <ligand>
        <name>substrate</name>
    </ligand>
</feature>
<feature type="binding site" evidence="1">
    <location>
        <position position="86"/>
    </location>
    <ligand>
        <name>Mg(2+)</name>
        <dbReference type="ChEBI" id="CHEBI:18420"/>
        <label>2</label>
    </ligand>
</feature>
<feature type="binding site" evidence="1">
    <location>
        <position position="189"/>
    </location>
    <ligand>
        <name>substrate</name>
    </ligand>
</feature>
<feature type="binding site" evidence="1">
    <location>
        <position position="220"/>
    </location>
    <ligand>
        <name>substrate</name>
    </ligand>
</feature>
<feature type="binding site" evidence="1">
    <location>
        <position position="226"/>
    </location>
    <ligand>
        <name>Mg(2+)</name>
        <dbReference type="ChEBI" id="CHEBI:18420"/>
        <label>2</label>
    </ligand>
</feature>
<name>F16PA_CAMJR</name>
<protein>
    <recommendedName>
        <fullName evidence="1">Fructose-1,6-bisphosphatase class 1</fullName>
        <shortName evidence="1">FBPase class 1</shortName>
        <ecNumber evidence="1">3.1.3.11</ecNumber>
    </recommendedName>
    <alternativeName>
        <fullName evidence="1">D-fructose-1,6-bisphosphate 1-phosphohydrolase class 1</fullName>
    </alternativeName>
</protein>
<evidence type="ECO:0000255" key="1">
    <source>
        <dbReference type="HAMAP-Rule" id="MF_01855"/>
    </source>
</evidence>
<organism>
    <name type="scientific">Campylobacter jejuni (strain RM1221)</name>
    <dbReference type="NCBI Taxonomy" id="195099"/>
    <lineage>
        <taxon>Bacteria</taxon>
        <taxon>Pseudomonadati</taxon>
        <taxon>Campylobacterota</taxon>
        <taxon>Epsilonproteobacteria</taxon>
        <taxon>Campylobacterales</taxon>
        <taxon>Campylobacteraceae</taxon>
        <taxon>Campylobacter</taxon>
    </lineage>
</organism>
<comment type="catalytic activity">
    <reaction evidence="1">
        <text>beta-D-fructose 1,6-bisphosphate + H2O = beta-D-fructose 6-phosphate + phosphate</text>
        <dbReference type="Rhea" id="RHEA:11064"/>
        <dbReference type="ChEBI" id="CHEBI:15377"/>
        <dbReference type="ChEBI" id="CHEBI:32966"/>
        <dbReference type="ChEBI" id="CHEBI:43474"/>
        <dbReference type="ChEBI" id="CHEBI:57634"/>
        <dbReference type="EC" id="3.1.3.11"/>
    </reaction>
</comment>
<comment type="cofactor">
    <cofactor evidence="1">
        <name>Mg(2+)</name>
        <dbReference type="ChEBI" id="CHEBI:18420"/>
    </cofactor>
    <text evidence="1">Binds 2 magnesium ions per subunit.</text>
</comment>
<comment type="pathway">
    <text evidence="1">Carbohydrate biosynthesis; gluconeogenesis.</text>
</comment>
<comment type="subunit">
    <text evidence="1">Homotetramer.</text>
</comment>
<comment type="subcellular location">
    <subcellularLocation>
        <location evidence="1">Cytoplasm</location>
    </subcellularLocation>
</comment>
<comment type="similarity">
    <text evidence="1">Belongs to the FBPase class 1 family.</text>
</comment>
<keyword id="KW-0119">Carbohydrate metabolism</keyword>
<keyword id="KW-0963">Cytoplasm</keyword>
<keyword id="KW-0378">Hydrolase</keyword>
<keyword id="KW-0460">Magnesium</keyword>
<keyword id="KW-0479">Metal-binding</keyword>
<sequence length="280" mass="31612">MQEVISYIQKAVLEISNALKFPDTSYSQNQNFTGDTQLKFDVLSDEIITKTLSQCSSIKAIISEEKDEILTLNERANFIVAYDPLDGSSLMDVNFAIGSIFAIYEEKANAKNLRAALYSMYGARLELVICKDQPKLYRLNANNEFIFIKDLKMNEKGKINATGGTQKFWEEKHAKFIKNLFDEGYRLRYSGAMVSDINQILLKGGGIFSYPATQDAPNGKLRAFFEVFPLAFIIEKAGGKTTNGKNRSLLELEFDKIHATTPCFFGSEYEISKLLKAYNE</sequence>
<gene>
    <name evidence="1" type="primary">fbp</name>
    <name type="ordered locus">CJE0927</name>
</gene>
<reference key="1">
    <citation type="journal article" date="2005" name="PLoS Biol.">
        <title>Major structural differences and novel potential virulence mechanisms from the genomes of multiple Campylobacter species.</title>
        <authorList>
            <person name="Fouts D.E."/>
            <person name="Mongodin E.F."/>
            <person name="Mandrell R.E."/>
            <person name="Miller W.G."/>
            <person name="Rasko D.A."/>
            <person name="Ravel J."/>
            <person name="Brinkac L.M."/>
            <person name="DeBoy R.T."/>
            <person name="Parker C.T."/>
            <person name="Daugherty S.C."/>
            <person name="Dodson R.J."/>
            <person name="Durkin A.S."/>
            <person name="Madupu R."/>
            <person name="Sullivan S.A."/>
            <person name="Shetty J.U."/>
            <person name="Ayodeji M.A."/>
            <person name="Shvartsbeyn A."/>
            <person name="Schatz M.C."/>
            <person name="Badger J.H."/>
            <person name="Fraser C.M."/>
            <person name="Nelson K.E."/>
        </authorList>
    </citation>
    <scope>NUCLEOTIDE SEQUENCE [LARGE SCALE GENOMIC DNA]</scope>
    <source>
        <strain>RM1221</strain>
    </source>
</reference>
<accession>Q5HUV6</accession>